<dbReference type="EMBL" id="AB010082">
    <property type="protein sequence ID" value="BAA24190.1"/>
    <property type="molecule type" value="Genomic_DNA"/>
</dbReference>
<dbReference type="EMBL" id="AB017508">
    <property type="protein sequence ID" value="BAA75294.1"/>
    <property type="molecule type" value="Genomic_DNA"/>
</dbReference>
<dbReference type="EMBL" id="BA000004">
    <property type="protein sequence ID" value="BAB03877.1"/>
    <property type="molecule type" value="Genomic_DNA"/>
</dbReference>
<dbReference type="PIR" id="T44406">
    <property type="entry name" value="T44406"/>
</dbReference>
<dbReference type="RefSeq" id="WP_010896341.1">
    <property type="nucleotide sequence ID" value="NC_002570.2"/>
</dbReference>
<dbReference type="SMR" id="O50630"/>
<dbReference type="STRING" id="272558.gene:10725998"/>
<dbReference type="GeneID" id="87595699"/>
<dbReference type="KEGG" id="bha:BH0158"/>
<dbReference type="eggNOG" id="COG0361">
    <property type="taxonomic scope" value="Bacteria"/>
</dbReference>
<dbReference type="HOGENOM" id="CLU_151267_1_0_9"/>
<dbReference type="OrthoDB" id="9803250at2"/>
<dbReference type="Proteomes" id="UP000001258">
    <property type="component" value="Chromosome"/>
</dbReference>
<dbReference type="GO" id="GO:0005829">
    <property type="term" value="C:cytosol"/>
    <property type="evidence" value="ECO:0007669"/>
    <property type="project" value="TreeGrafter"/>
</dbReference>
<dbReference type="GO" id="GO:0043022">
    <property type="term" value="F:ribosome binding"/>
    <property type="evidence" value="ECO:0007669"/>
    <property type="project" value="UniProtKB-UniRule"/>
</dbReference>
<dbReference type="GO" id="GO:0019843">
    <property type="term" value="F:rRNA binding"/>
    <property type="evidence" value="ECO:0007669"/>
    <property type="project" value="UniProtKB-UniRule"/>
</dbReference>
<dbReference type="GO" id="GO:0003743">
    <property type="term" value="F:translation initiation factor activity"/>
    <property type="evidence" value="ECO:0007669"/>
    <property type="project" value="UniProtKB-UniRule"/>
</dbReference>
<dbReference type="CDD" id="cd04451">
    <property type="entry name" value="S1_IF1"/>
    <property type="match status" value="1"/>
</dbReference>
<dbReference type="FunFam" id="2.40.50.140:FF:000002">
    <property type="entry name" value="Translation initiation factor IF-1"/>
    <property type="match status" value="1"/>
</dbReference>
<dbReference type="Gene3D" id="2.40.50.140">
    <property type="entry name" value="Nucleic acid-binding proteins"/>
    <property type="match status" value="1"/>
</dbReference>
<dbReference type="HAMAP" id="MF_00075">
    <property type="entry name" value="IF_1"/>
    <property type="match status" value="1"/>
</dbReference>
<dbReference type="InterPro" id="IPR012340">
    <property type="entry name" value="NA-bd_OB-fold"/>
</dbReference>
<dbReference type="InterPro" id="IPR006196">
    <property type="entry name" value="RNA-binding_domain_S1_IF1"/>
</dbReference>
<dbReference type="InterPro" id="IPR003029">
    <property type="entry name" value="S1_domain"/>
</dbReference>
<dbReference type="InterPro" id="IPR004368">
    <property type="entry name" value="TIF_IF1"/>
</dbReference>
<dbReference type="NCBIfam" id="TIGR00008">
    <property type="entry name" value="infA"/>
    <property type="match status" value="1"/>
</dbReference>
<dbReference type="PANTHER" id="PTHR33370">
    <property type="entry name" value="TRANSLATION INITIATION FACTOR IF-1, CHLOROPLASTIC"/>
    <property type="match status" value="1"/>
</dbReference>
<dbReference type="PANTHER" id="PTHR33370:SF1">
    <property type="entry name" value="TRANSLATION INITIATION FACTOR IF-1, CHLOROPLASTIC"/>
    <property type="match status" value="1"/>
</dbReference>
<dbReference type="Pfam" id="PF01176">
    <property type="entry name" value="eIF-1a"/>
    <property type="match status" value="1"/>
</dbReference>
<dbReference type="SMART" id="SM00316">
    <property type="entry name" value="S1"/>
    <property type="match status" value="1"/>
</dbReference>
<dbReference type="SUPFAM" id="SSF50249">
    <property type="entry name" value="Nucleic acid-binding proteins"/>
    <property type="match status" value="1"/>
</dbReference>
<dbReference type="PROSITE" id="PS50832">
    <property type="entry name" value="S1_IF1_TYPE"/>
    <property type="match status" value="1"/>
</dbReference>
<reference key="1">
    <citation type="journal article" date="1998" name="FEMS Microbiol. Lett.">
        <title>Cloning and expression of the gene encoding RNA polymerase alpha subunit from alkaliphilic Bacillus sp. strain C-125.</title>
        <authorList>
            <person name="Nakasone K."/>
            <person name="Takaki Y."/>
            <person name="Takami H."/>
            <person name="Inoue A."/>
            <person name="Horikoshi K."/>
        </authorList>
    </citation>
    <scope>NUCLEOTIDE SEQUENCE [GENOMIC DNA]</scope>
    <source>
        <strain>ATCC BAA-125 / DSM 18197 / FERM 7344 / JCM 9153 / C-125</strain>
    </source>
</reference>
<reference key="2">
    <citation type="journal article" date="1999" name="Biosci. Biotechnol. Biochem.">
        <title>Sequence analysis of a 32-kb region including the major ribosomal protein gene clusters from alkaliphilic Bacillus sp. strain C-125.</title>
        <authorList>
            <person name="Takami H."/>
            <person name="Takaki Y."/>
            <person name="Nakasone K."/>
            <person name="Hirama C."/>
            <person name="Inoue A."/>
            <person name="Horikoshi K."/>
        </authorList>
    </citation>
    <scope>NUCLEOTIDE SEQUENCE [GENOMIC DNA]</scope>
    <source>
        <strain>ATCC BAA-125 / DSM 18197 / FERM 7344 / JCM 9153 / C-125</strain>
    </source>
</reference>
<reference key="3">
    <citation type="journal article" date="2000" name="Nucleic Acids Res.">
        <title>Complete genome sequence of the alkaliphilic bacterium Bacillus halodurans and genomic sequence comparison with Bacillus subtilis.</title>
        <authorList>
            <person name="Takami H."/>
            <person name="Nakasone K."/>
            <person name="Takaki Y."/>
            <person name="Maeno G."/>
            <person name="Sasaki R."/>
            <person name="Masui N."/>
            <person name="Fuji F."/>
            <person name="Hirama C."/>
            <person name="Nakamura Y."/>
            <person name="Ogasawara N."/>
            <person name="Kuhara S."/>
            <person name="Horikoshi K."/>
        </authorList>
    </citation>
    <scope>NUCLEOTIDE SEQUENCE [LARGE SCALE GENOMIC DNA]</scope>
    <source>
        <strain>ATCC BAA-125 / DSM 18197 / FERM 7344 / JCM 9153 / C-125</strain>
    </source>
</reference>
<evidence type="ECO:0000250" key="1"/>
<evidence type="ECO:0000255" key="2">
    <source>
        <dbReference type="HAMAP-Rule" id="MF_00075"/>
    </source>
</evidence>
<gene>
    <name evidence="2" type="primary">infA</name>
    <name type="ordered locus">BH0158</name>
</gene>
<keyword id="KW-0963">Cytoplasm</keyword>
<keyword id="KW-0396">Initiation factor</keyword>
<keyword id="KW-0597">Phosphoprotein</keyword>
<keyword id="KW-0648">Protein biosynthesis</keyword>
<keyword id="KW-1185">Reference proteome</keyword>
<keyword id="KW-0694">RNA-binding</keyword>
<keyword id="KW-0699">rRNA-binding</keyword>
<feature type="initiator methionine" description="Removed" evidence="1">
    <location>
        <position position="1"/>
    </location>
</feature>
<feature type="chain" id="PRO_0000095734" description="Translation initiation factor IF-1">
    <location>
        <begin position="2"/>
        <end position="72"/>
    </location>
</feature>
<feature type="domain" description="S1-like" evidence="2">
    <location>
        <begin position="2"/>
        <end position="72"/>
    </location>
</feature>
<feature type="modified residue" description="Phosphotyrosine" evidence="2">
    <location>
        <position position="60"/>
    </location>
</feature>
<comment type="function">
    <text evidence="2">One of the essential components for the initiation of protein synthesis. Stabilizes the binding of IF-2 and IF-3 on the 30S subunit to which N-formylmethionyl-tRNA(fMet) subsequently binds. Helps modulate mRNA selection, yielding the 30S pre-initiation complex (PIC). Upon addition of the 50S ribosomal subunit IF-1, IF-2 and IF-3 are released leaving the mature 70S translation initiation complex.</text>
</comment>
<comment type="subunit">
    <text evidence="2">Component of the 30S ribosomal translation pre-initiation complex which assembles on the 30S ribosome in the order IF-2 and IF-3, IF-1 and N-formylmethionyl-tRNA(fMet); mRNA recruitment can occur at any time during PIC assembly.</text>
</comment>
<comment type="subcellular location">
    <subcellularLocation>
        <location evidence="2">Cytoplasm</location>
    </subcellularLocation>
</comment>
<comment type="similarity">
    <text evidence="2">Belongs to the IF-1 family.</text>
</comment>
<proteinExistence type="inferred from homology"/>
<name>IF1_HALH5</name>
<accession>O50630</accession>
<protein>
    <recommendedName>
        <fullName evidence="2">Translation initiation factor IF-1</fullName>
    </recommendedName>
</protein>
<sequence length="72" mass="8293">MAKEDVIEVEGTVIEPLPNAMFRVELENGHKILAHVSGKIRMHFIRILPGDKVTVELSPYDLTRGRITYRYK</sequence>
<organism>
    <name type="scientific">Halalkalibacterium halodurans (strain ATCC BAA-125 / DSM 18197 / FERM 7344 / JCM 9153 / C-125)</name>
    <name type="common">Bacillus halodurans</name>
    <dbReference type="NCBI Taxonomy" id="272558"/>
    <lineage>
        <taxon>Bacteria</taxon>
        <taxon>Bacillati</taxon>
        <taxon>Bacillota</taxon>
        <taxon>Bacilli</taxon>
        <taxon>Bacillales</taxon>
        <taxon>Bacillaceae</taxon>
        <taxon>Halalkalibacterium (ex Joshi et al. 2022)</taxon>
    </lineage>
</organism>